<name>SYG_BACC1</name>
<reference key="1">
    <citation type="journal article" date="2004" name="Nucleic Acids Res.">
        <title>The genome sequence of Bacillus cereus ATCC 10987 reveals metabolic adaptations and a large plasmid related to Bacillus anthracis pXO1.</title>
        <authorList>
            <person name="Rasko D.A."/>
            <person name="Ravel J."/>
            <person name="Oekstad O.A."/>
            <person name="Helgason E."/>
            <person name="Cer R.Z."/>
            <person name="Jiang L."/>
            <person name="Shores K.A."/>
            <person name="Fouts D.E."/>
            <person name="Tourasse N.J."/>
            <person name="Angiuoli S.V."/>
            <person name="Kolonay J.F."/>
            <person name="Nelson W.C."/>
            <person name="Kolstoe A.-B."/>
            <person name="Fraser C.M."/>
            <person name="Read T.D."/>
        </authorList>
    </citation>
    <scope>NUCLEOTIDE SEQUENCE [LARGE SCALE GENOMIC DNA]</scope>
    <source>
        <strain>ATCC 10987 / NRS 248</strain>
    </source>
</reference>
<evidence type="ECO:0000255" key="1">
    <source>
        <dbReference type="HAMAP-Rule" id="MF_00253"/>
    </source>
</evidence>
<accession>Q72YG8</accession>
<comment type="function">
    <text evidence="1">Catalyzes the attachment of glycine to tRNA(Gly).</text>
</comment>
<comment type="catalytic activity">
    <reaction evidence="1">
        <text>tRNA(Gly) + glycine + ATP = glycyl-tRNA(Gly) + AMP + diphosphate</text>
        <dbReference type="Rhea" id="RHEA:16013"/>
        <dbReference type="Rhea" id="RHEA-COMP:9664"/>
        <dbReference type="Rhea" id="RHEA-COMP:9683"/>
        <dbReference type="ChEBI" id="CHEBI:30616"/>
        <dbReference type="ChEBI" id="CHEBI:33019"/>
        <dbReference type="ChEBI" id="CHEBI:57305"/>
        <dbReference type="ChEBI" id="CHEBI:78442"/>
        <dbReference type="ChEBI" id="CHEBI:78522"/>
        <dbReference type="ChEBI" id="CHEBI:456215"/>
        <dbReference type="EC" id="6.1.1.14"/>
    </reaction>
</comment>
<comment type="subunit">
    <text evidence="1">Homodimer.</text>
</comment>
<comment type="subcellular location">
    <subcellularLocation>
        <location evidence="1">Cytoplasm</location>
    </subcellularLocation>
</comment>
<comment type="similarity">
    <text evidence="1">Belongs to the class-II aminoacyl-tRNA synthetase family.</text>
</comment>
<protein>
    <recommendedName>
        <fullName evidence="1">Glycine--tRNA ligase</fullName>
        <ecNumber evidence="1">6.1.1.14</ecNumber>
    </recommendedName>
    <alternativeName>
        <fullName evidence="1">Glycyl-tRNA synthetase</fullName>
        <shortName evidence="1">GlyRS</shortName>
    </alternativeName>
</protein>
<gene>
    <name evidence="1" type="primary">glyQS</name>
    <name type="synonym">glyS</name>
    <name type="ordered locus">BCE_5053</name>
</gene>
<keyword id="KW-0030">Aminoacyl-tRNA synthetase</keyword>
<keyword id="KW-0067">ATP-binding</keyword>
<keyword id="KW-0963">Cytoplasm</keyword>
<keyword id="KW-0436">Ligase</keyword>
<keyword id="KW-0547">Nucleotide-binding</keyword>
<keyword id="KW-0648">Protein biosynthesis</keyword>
<feature type="chain" id="PRO_0000072944" description="Glycine--tRNA ligase">
    <location>
        <begin position="1"/>
        <end position="458"/>
    </location>
</feature>
<feature type="binding site" evidence="1">
    <location>
        <position position="97"/>
    </location>
    <ligand>
        <name>substrate</name>
    </ligand>
</feature>
<feature type="binding site" evidence="1">
    <location>
        <position position="171"/>
    </location>
    <ligand>
        <name>substrate</name>
    </ligand>
</feature>
<feature type="binding site" evidence="1">
    <location>
        <begin position="203"/>
        <end position="205"/>
    </location>
    <ligand>
        <name>ATP</name>
        <dbReference type="ChEBI" id="CHEBI:30616"/>
    </ligand>
</feature>
<feature type="binding site" evidence="1">
    <location>
        <begin position="213"/>
        <end position="218"/>
    </location>
    <ligand>
        <name>ATP</name>
        <dbReference type="ChEBI" id="CHEBI:30616"/>
    </ligand>
</feature>
<feature type="binding site" evidence="1">
    <location>
        <begin position="218"/>
        <end position="222"/>
    </location>
    <ligand>
        <name>substrate</name>
    </ligand>
</feature>
<feature type="binding site" evidence="1">
    <location>
        <begin position="287"/>
        <end position="288"/>
    </location>
    <ligand>
        <name>ATP</name>
        <dbReference type="ChEBI" id="CHEBI:30616"/>
    </ligand>
</feature>
<feature type="binding site" evidence="1">
    <location>
        <begin position="327"/>
        <end position="331"/>
    </location>
    <ligand>
        <name>substrate</name>
    </ligand>
</feature>
<feature type="binding site" evidence="1">
    <location>
        <begin position="331"/>
        <end position="334"/>
    </location>
    <ligand>
        <name>ATP</name>
        <dbReference type="ChEBI" id="CHEBI:30616"/>
    </ligand>
</feature>
<dbReference type="EC" id="6.1.1.14" evidence="1"/>
<dbReference type="EMBL" id="AE017194">
    <property type="protein sequence ID" value="AAS43954.1"/>
    <property type="molecule type" value="Genomic_DNA"/>
</dbReference>
<dbReference type="SMR" id="Q72YG8"/>
<dbReference type="KEGG" id="bca:BCE_5053"/>
<dbReference type="HOGENOM" id="CLU_015515_2_1_9"/>
<dbReference type="Proteomes" id="UP000002527">
    <property type="component" value="Chromosome"/>
</dbReference>
<dbReference type="GO" id="GO:0005737">
    <property type="term" value="C:cytoplasm"/>
    <property type="evidence" value="ECO:0007669"/>
    <property type="project" value="UniProtKB-SubCell"/>
</dbReference>
<dbReference type="GO" id="GO:0005524">
    <property type="term" value="F:ATP binding"/>
    <property type="evidence" value="ECO:0007669"/>
    <property type="project" value="UniProtKB-UniRule"/>
</dbReference>
<dbReference type="GO" id="GO:0140096">
    <property type="term" value="F:catalytic activity, acting on a protein"/>
    <property type="evidence" value="ECO:0007669"/>
    <property type="project" value="UniProtKB-ARBA"/>
</dbReference>
<dbReference type="GO" id="GO:0004820">
    <property type="term" value="F:glycine-tRNA ligase activity"/>
    <property type="evidence" value="ECO:0000250"/>
    <property type="project" value="UniProtKB"/>
</dbReference>
<dbReference type="GO" id="GO:0046983">
    <property type="term" value="F:protein dimerization activity"/>
    <property type="evidence" value="ECO:0000250"/>
    <property type="project" value="UniProtKB"/>
</dbReference>
<dbReference type="GO" id="GO:0016740">
    <property type="term" value="F:transferase activity"/>
    <property type="evidence" value="ECO:0007669"/>
    <property type="project" value="UniProtKB-ARBA"/>
</dbReference>
<dbReference type="GO" id="GO:0006426">
    <property type="term" value="P:glycyl-tRNA aminoacylation"/>
    <property type="evidence" value="ECO:0007669"/>
    <property type="project" value="UniProtKB-UniRule"/>
</dbReference>
<dbReference type="CDD" id="cd00774">
    <property type="entry name" value="GlyRS-like_core"/>
    <property type="match status" value="1"/>
</dbReference>
<dbReference type="CDD" id="cd00858">
    <property type="entry name" value="GlyRS_anticodon"/>
    <property type="match status" value="1"/>
</dbReference>
<dbReference type="FunFam" id="3.30.40.230:FF:000004">
    <property type="entry name" value="Glycine--tRNA ligase"/>
    <property type="match status" value="1"/>
</dbReference>
<dbReference type="FunFam" id="3.40.50.800:FF:000002">
    <property type="entry name" value="Glycine--tRNA ligase"/>
    <property type="match status" value="1"/>
</dbReference>
<dbReference type="Gene3D" id="3.30.40.230">
    <property type="match status" value="1"/>
</dbReference>
<dbReference type="Gene3D" id="3.40.50.800">
    <property type="entry name" value="Anticodon-binding domain"/>
    <property type="match status" value="1"/>
</dbReference>
<dbReference type="Gene3D" id="3.30.930.10">
    <property type="entry name" value="Bira Bifunctional Protein, Domain 2"/>
    <property type="match status" value="1"/>
</dbReference>
<dbReference type="HAMAP" id="MF_00253_B">
    <property type="entry name" value="Gly_tRNA_synth_B"/>
    <property type="match status" value="1"/>
</dbReference>
<dbReference type="InterPro" id="IPR002314">
    <property type="entry name" value="aa-tRNA-synt_IIb"/>
</dbReference>
<dbReference type="InterPro" id="IPR006195">
    <property type="entry name" value="aa-tRNA-synth_II"/>
</dbReference>
<dbReference type="InterPro" id="IPR045864">
    <property type="entry name" value="aa-tRNA-synth_II/BPL/LPL"/>
</dbReference>
<dbReference type="InterPro" id="IPR004154">
    <property type="entry name" value="Anticodon-bd"/>
</dbReference>
<dbReference type="InterPro" id="IPR036621">
    <property type="entry name" value="Anticodon-bd_dom_sf"/>
</dbReference>
<dbReference type="InterPro" id="IPR027031">
    <property type="entry name" value="Gly-tRNA_synthase/POLG2"/>
</dbReference>
<dbReference type="InterPro" id="IPR022961">
    <property type="entry name" value="Gly_tRNA_ligase_bac"/>
</dbReference>
<dbReference type="InterPro" id="IPR033731">
    <property type="entry name" value="GlyRS-like_core"/>
</dbReference>
<dbReference type="InterPro" id="IPR002315">
    <property type="entry name" value="tRNA-synt_gly"/>
</dbReference>
<dbReference type="NCBIfam" id="TIGR00389">
    <property type="entry name" value="glyS_dimeric"/>
    <property type="match status" value="1"/>
</dbReference>
<dbReference type="NCBIfam" id="NF003211">
    <property type="entry name" value="PRK04173.1"/>
    <property type="match status" value="1"/>
</dbReference>
<dbReference type="PANTHER" id="PTHR10745:SF8">
    <property type="entry name" value="DNA POLYMERASE SUBUNIT GAMMA-2, MITOCHONDRIAL"/>
    <property type="match status" value="1"/>
</dbReference>
<dbReference type="PANTHER" id="PTHR10745">
    <property type="entry name" value="GLYCYL-TRNA SYNTHETASE/DNA POLYMERASE SUBUNIT GAMMA-2"/>
    <property type="match status" value="1"/>
</dbReference>
<dbReference type="Pfam" id="PF03129">
    <property type="entry name" value="HGTP_anticodon"/>
    <property type="match status" value="1"/>
</dbReference>
<dbReference type="Pfam" id="PF00587">
    <property type="entry name" value="tRNA-synt_2b"/>
    <property type="match status" value="1"/>
</dbReference>
<dbReference type="PRINTS" id="PR01043">
    <property type="entry name" value="TRNASYNTHGLY"/>
</dbReference>
<dbReference type="SUPFAM" id="SSF52954">
    <property type="entry name" value="Class II aaRS ABD-related"/>
    <property type="match status" value="1"/>
</dbReference>
<dbReference type="SUPFAM" id="SSF55681">
    <property type="entry name" value="Class II aaRS and biotin synthetases"/>
    <property type="match status" value="1"/>
</dbReference>
<dbReference type="PROSITE" id="PS50862">
    <property type="entry name" value="AA_TRNA_LIGASE_II"/>
    <property type="match status" value="1"/>
</dbReference>
<proteinExistence type="inferred from homology"/>
<sequence>MYSMEQVVNLAKHRGFVFPGSEIYGGLANTWDYGPLGIELKNNVKKAWWKKFIQESPYNVGLDAAILMNPKTWIASGHVGNFNDPMIDCKKCKARHRADKLIEDALDAKGIEMVVDGLTFDQMADLMKEHEVKCPDCGSEEFTEIRQFNLMFKTFQGVTESSTNEIFLRPETAQGIFVNFKNVQRSMRKKLPFGIGQIGKSFRNEITPGNFTFRTREFEQMELEFFCKPGEDLEWFAFWRETCKNWLLSLGMTEESMRLRDHGEEELSHYSNATTDIEFKFPFGWGELWGVASRTDFDLKRHMEHSNEDFNYIDPQTNERYVPYCIEPSLGADRVTLAFLCDAYEEEQLENDSRTVLRFHPALAPYKAAILPLSKKLSEGATEVFAELAKDFMVDFDETGSIGKRYRRQDEIGTPFCITYDFDSVEDKAVTVRDRDTMEQVRMPISELKGFLEKKIQF</sequence>
<organism>
    <name type="scientific">Bacillus cereus (strain ATCC 10987 / NRS 248)</name>
    <dbReference type="NCBI Taxonomy" id="222523"/>
    <lineage>
        <taxon>Bacteria</taxon>
        <taxon>Bacillati</taxon>
        <taxon>Bacillota</taxon>
        <taxon>Bacilli</taxon>
        <taxon>Bacillales</taxon>
        <taxon>Bacillaceae</taxon>
        <taxon>Bacillus</taxon>
        <taxon>Bacillus cereus group</taxon>
    </lineage>
</organism>